<reference key="1">
    <citation type="journal article" date="1993" name="J. Cell Biol.">
        <title>Neurofilament deficiency in quail caused by nonsense mutation in neurofilament-L gene.</title>
        <authorList>
            <person name="Ohara O."/>
            <person name="Gahara Y."/>
            <person name="Miyake T."/>
            <person name="Teraoka H."/>
            <person name="Kitamura T."/>
        </authorList>
    </citation>
    <scope>NUCLEOTIDE SEQUENCE [GENOMIC DNA]</scope>
    <source>
        <tissue>Brain</tissue>
    </source>
</reference>
<dbReference type="EMBL" id="D13223">
    <property type="protein sequence ID" value="BAA02504.1"/>
    <property type="molecule type" value="Genomic_DNA"/>
</dbReference>
<dbReference type="EMBL" id="D13222">
    <property type="protein sequence ID" value="BAA02503.1"/>
    <property type="status" value="ALT_TERM"/>
    <property type="molecule type" value="Genomic_DNA"/>
</dbReference>
<dbReference type="PIR" id="A46024">
    <property type="entry name" value="A46024"/>
</dbReference>
<dbReference type="SMR" id="Q02916"/>
<dbReference type="Proteomes" id="UP000694412">
    <property type="component" value="Unplaced"/>
</dbReference>
<dbReference type="GO" id="GO:0030424">
    <property type="term" value="C:axon"/>
    <property type="evidence" value="ECO:0000250"/>
    <property type="project" value="UniProtKB"/>
</dbReference>
<dbReference type="GO" id="GO:1904115">
    <property type="term" value="C:axon cytoplasm"/>
    <property type="evidence" value="ECO:0007669"/>
    <property type="project" value="GOC"/>
</dbReference>
<dbReference type="GO" id="GO:0005883">
    <property type="term" value="C:neurofilament"/>
    <property type="evidence" value="ECO:0000250"/>
    <property type="project" value="UniProtKB"/>
</dbReference>
<dbReference type="GO" id="GO:0099160">
    <property type="term" value="C:postsynaptic intermediate filament cytoskeleton"/>
    <property type="evidence" value="ECO:0007669"/>
    <property type="project" value="TreeGrafter"/>
</dbReference>
<dbReference type="GO" id="GO:0042802">
    <property type="term" value="F:identical protein binding"/>
    <property type="evidence" value="ECO:0000250"/>
    <property type="project" value="UniProtKB"/>
</dbReference>
<dbReference type="GO" id="GO:0005200">
    <property type="term" value="F:structural constituent of cytoskeleton"/>
    <property type="evidence" value="ECO:0000250"/>
    <property type="project" value="UniProtKB"/>
</dbReference>
<dbReference type="GO" id="GO:0099184">
    <property type="term" value="F:structural constituent of postsynaptic intermediate filament cytoskeleton"/>
    <property type="evidence" value="ECO:0007669"/>
    <property type="project" value="TreeGrafter"/>
</dbReference>
<dbReference type="GO" id="GO:0008089">
    <property type="term" value="P:anterograde axonal transport"/>
    <property type="evidence" value="ECO:0000250"/>
    <property type="project" value="UniProtKB"/>
</dbReference>
<dbReference type="GO" id="GO:0019896">
    <property type="term" value="P:axonal transport of mitochondrion"/>
    <property type="evidence" value="ECO:0000250"/>
    <property type="project" value="UniProtKB"/>
</dbReference>
<dbReference type="GO" id="GO:0045109">
    <property type="term" value="P:intermediate filament organization"/>
    <property type="evidence" value="ECO:0000250"/>
    <property type="project" value="UniProtKB"/>
</dbReference>
<dbReference type="GO" id="GO:0033693">
    <property type="term" value="P:neurofilament bundle assembly"/>
    <property type="evidence" value="ECO:0000250"/>
    <property type="project" value="UniProtKB"/>
</dbReference>
<dbReference type="GO" id="GO:0008090">
    <property type="term" value="P:retrograde axonal transport"/>
    <property type="evidence" value="ECO:0000250"/>
    <property type="project" value="UniProtKB"/>
</dbReference>
<dbReference type="FunFam" id="1.20.5.1160:FF:000001">
    <property type="entry name" value="Keratin type II"/>
    <property type="match status" value="1"/>
</dbReference>
<dbReference type="FunFam" id="1.20.5.170:FF:000002">
    <property type="entry name" value="Type I keratin KA11"/>
    <property type="match status" value="1"/>
</dbReference>
<dbReference type="FunFam" id="1.20.5.500:FF:000001">
    <property type="entry name" value="Type II keratin 23"/>
    <property type="match status" value="1"/>
</dbReference>
<dbReference type="Gene3D" id="1.20.5.170">
    <property type="match status" value="1"/>
</dbReference>
<dbReference type="Gene3D" id="1.20.5.500">
    <property type="entry name" value="Single helix bin"/>
    <property type="match status" value="1"/>
</dbReference>
<dbReference type="Gene3D" id="1.20.5.1160">
    <property type="entry name" value="Vasodilator-stimulated phosphoprotein"/>
    <property type="match status" value="1"/>
</dbReference>
<dbReference type="InterPro" id="IPR018039">
    <property type="entry name" value="IF_conserved"/>
</dbReference>
<dbReference type="InterPro" id="IPR039008">
    <property type="entry name" value="IF_rod_dom"/>
</dbReference>
<dbReference type="InterPro" id="IPR006821">
    <property type="entry name" value="Intermed_filament_DNA-bd"/>
</dbReference>
<dbReference type="InterPro" id="IPR050405">
    <property type="entry name" value="Intermediate_filament"/>
</dbReference>
<dbReference type="InterPro" id="IPR002957">
    <property type="entry name" value="Keratin_I"/>
</dbReference>
<dbReference type="PANTHER" id="PTHR45652">
    <property type="entry name" value="GLIAL FIBRILLARY ACIDIC PROTEIN"/>
    <property type="match status" value="1"/>
</dbReference>
<dbReference type="PANTHER" id="PTHR45652:SF8">
    <property type="entry name" value="NEUROFILAMENT LIGHT POLYPEPTIDE"/>
    <property type="match status" value="1"/>
</dbReference>
<dbReference type="Pfam" id="PF00038">
    <property type="entry name" value="Filament"/>
    <property type="match status" value="1"/>
</dbReference>
<dbReference type="Pfam" id="PF04732">
    <property type="entry name" value="Filament_head"/>
    <property type="match status" value="1"/>
</dbReference>
<dbReference type="PRINTS" id="PR01248">
    <property type="entry name" value="TYPE1KERATIN"/>
</dbReference>
<dbReference type="SMART" id="SM01391">
    <property type="entry name" value="Filament"/>
    <property type="match status" value="1"/>
</dbReference>
<dbReference type="SUPFAM" id="SSF64593">
    <property type="entry name" value="Intermediate filament protein, coiled coil region"/>
    <property type="match status" value="2"/>
</dbReference>
<dbReference type="PROSITE" id="PS00226">
    <property type="entry name" value="IF_ROD_1"/>
    <property type="match status" value="1"/>
</dbReference>
<dbReference type="PROSITE" id="PS51842">
    <property type="entry name" value="IF_ROD_2"/>
    <property type="match status" value="1"/>
</dbReference>
<name>NFL_COTJA</name>
<organism>
    <name type="scientific">Coturnix japonica</name>
    <name type="common">Japanese quail</name>
    <name type="synonym">Coturnix coturnix japonica</name>
    <dbReference type="NCBI Taxonomy" id="93934"/>
    <lineage>
        <taxon>Eukaryota</taxon>
        <taxon>Metazoa</taxon>
        <taxon>Chordata</taxon>
        <taxon>Craniata</taxon>
        <taxon>Vertebrata</taxon>
        <taxon>Euteleostomi</taxon>
        <taxon>Archelosauria</taxon>
        <taxon>Archosauria</taxon>
        <taxon>Dinosauria</taxon>
        <taxon>Saurischia</taxon>
        <taxon>Theropoda</taxon>
        <taxon>Coelurosauria</taxon>
        <taxon>Aves</taxon>
        <taxon>Neognathae</taxon>
        <taxon>Galloanserae</taxon>
        <taxon>Galliformes</taxon>
        <taxon>Phasianidae</taxon>
        <taxon>Perdicinae</taxon>
        <taxon>Coturnix</taxon>
    </lineage>
</organism>
<proteinExistence type="inferred from homology"/>
<keyword id="KW-0007">Acetylation</keyword>
<keyword id="KW-0966">Cell projection</keyword>
<keyword id="KW-0175">Coiled coil</keyword>
<keyword id="KW-0963">Cytoplasm</keyword>
<keyword id="KW-0206">Cytoskeleton</keyword>
<keyword id="KW-0403">Intermediate filament</keyword>
<keyword id="KW-1185">Reference proteome</keyword>
<feature type="initiator methionine" description="Removed" evidence="1">
    <location>
        <position position="1"/>
    </location>
</feature>
<feature type="chain" id="PRO_0000063791" description="Neurofilament light polypeptide">
    <location>
        <begin position="2"/>
        <end position="556"/>
    </location>
</feature>
<feature type="domain" description="IF rod" evidence="4">
    <location>
        <begin position="91"/>
        <end position="402"/>
    </location>
</feature>
<feature type="region of interest" description="Head" evidence="1">
    <location>
        <begin position="2"/>
        <end position="94"/>
    </location>
</feature>
<feature type="region of interest" description="Coil 1A">
    <location>
        <begin position="95"/>
        <end position="126"/>
    </location>
</feature>
<feature type="region of interest" description="Linker 1">
    <location>
        <begin position="127"/>
        <end position="139"/>
    </location>
</feature>
<feature type="region of interest" description="Coil 1B">
    <location>
        <begin position="140"/>
        <end position="235"/>
    </location>
</feature>
<feature type="region of interest" description="Linker 12">
    <location>
        <begin position="236"/>
        <end position="254"/>
    </location>
</feature>
<feature type="region of interest" description="Coil 2A">
    <location>
        <begin position="255"/>
        <end position="273"/>
    </location>
</feature>
<feature type="region of interest" description="Linker 2">
    <location>
        <begin position="274"/>
        <end position="282"/>
    </location>
</feature>
<feature type="region of interest" description="Coil 2B">
    <location>
        <begin position="283"/>
        <end position="398"/>
    </location>
</feature>
<feature type="region of interest" description="Tail" evidence="1">
    <location>
        <begin position="399"/>
        <end position="556"/>
    </location>
</feature>
<feature type="region of interest" description="Tail, subdomain A">
    <location>
        <begin position="399"/>
        <end position="445"/>
    </location>
</feature>
<feature type="region of interest" description="Tail, subdomain B (acidic)">
    <location>
        <begin position="446"/>
        <end position="556"/>
    </location>
</feature>
<feature type="region of interest" description="Disordered" evidence="5">
    <location>
        <begin position="464"/>
        <end position="556"/>
    </location>
</feature>
<feature type="compositionally biased region" description="Low complexity" evidence="5">
    <location>
        <begin position="464"/>
        <end position="473"/>
    </location>
</feature>
<feature type="compositionally biased region" description="Acidic residues" evidence="5">
    <location>
        <begin position="474"/>
        <end position="540"/>
    </location>
</feature>
<feature type="compositionally biased region" description="Basic and acidic residues" evidence="5">
    <location>
        <begin position="541"/>
        <end position="556"/>
    </location>
</feature>
<feature type="modified residue" description="N-acetylserine" evidence="1">
    <location>
        <position position="2"/>
    </location>
</feature>
<accession>Q02916</accession>
<evidence type="ECO:0000250" key="1"/>
<evidence type="ECO:0000250" key="2">
    <source>
        <dbReference type="UniProtKB" id="P08551"/>
    </source>
</evidence>
<evidence type="ECO:0000250" key="3">
    <source>
        <dbReference type="UniProtKB" id="P19527"/>
    </source>
</evidence>
<evidence type="ECO:0000255" key="4">
    <source>
        <dbReference type="PROSITE-ProRule" id="PRU01188"/>
    </source>
</evidence>
<evidence type="ECO:0000256" key="5">
    <source>
        <dbReference type="SAM" id="MobiDB-lite"/>
    </source>
</evidence>
<sequence>MSSYGYDPFFPSYKRRYADSPRLHVSAMRSGGYSSARSAYSSLSAPVSSVSVRRSYATSSASGSLLHSVDSLDLSQVAAISNDLKSIRSQERAQLQDLNDRFACFIERVHELEQQNKVLEAELLVLRQKHAEPSRFRALYEQEIRELRLAAEEATSEKQALQGERESLEETLRGLQARYEEEVLSREDAEARLLEVRKGADEAGLARAELEKRVDSLLDELAFLKKVHEEELAELQAQIQYAHLSVEMDVSAKPDLSAALRDIRAQYEKLAARNMQNAEEWFRSRFTVLSESAAKNTDAVRAAKDEVSESRRLLKAKTLEIEATRGMNEALEKQLQELEEKQSADISALQDTINKLENELRTTKSEMARYLKEYQDLLNVKMALDIEIAAYRKLLEGEETRLSFTSVGSITSGYTQTAPTFGRSAYSGLQSTSYLMTTRSFPTYYSSHVQEEQIEIEETIEAAKAGEAKAAPAEEGEEEEKEEGEEEEAGGEEAEEEEEGAKEESEEGKEGEEEEGEETAAEDGEESQETAEETGEEEKEEKEAAGKEETEVKKKA</sequence>
<comment type="function">
    <text evidence="2">Neurofilaments usually contain three intermediate filament proteins: NEFL, NEFM, and NEFH which are involved in the maintenance of neuronal caliber. May additionally cooperate with the neuronal intermediate filament proteins to form neuronal filamentous networks (By similarity).</text>
</comment>
<comment type="subunit">
    <text evidence="3">Forms homodimers (in vitro).</text>
</comment>
<comment type="subcellular location">
    <subcellularLocation>
        <location evidence="2">Cell projection</location>
        <location evidence="2">Axon</location>
    </subcellularLocation>
    <subcellularLocation>
        <location evidence="2">Cytoplasm</location>
        <location evidence="2">Cytoskeleton</location>
    </subcellularLocation>
</comment>
<comment type="domain">
    <text>The extra mass and high charge density that distinguish the neurofilament proteins from all other intermediate filament proteins are due to the tailpiece extensions. This region may form a charged scaffolding structure suitable for interaction with other neuronal components or ions.</text>
</comment>
<comment type="disease">
    <text>NF-L deficiency causes the disorder quiver.</text>
</comment>
<comment type="miscellaneous">
    <text>NF-L is the most abundant of the three neurofilament proteins and, as the other nonepithelial intermediate filament proteins, it can form homomeric 10-nm filaments.</text>
</comment>
<comment type="similarity">
    <text evidence="4">Belongs to the intermediate filament family.</text>
</comment>
<protein>
    <recommendedName>
        <fullName>Neurofilament light polypeptide</fullName>
        <shortName>NF-L</shortName>
    </recommendedName>
    <alternativeName>
        <fullName>Neurofilament triplet L protein</fullName>
    </alternativeName>
</protein>
<gene>
    <name type="primary">NEFL</name>
</gene>